<sequence length="393" mass="43842">MTTEVNQLSEHPLVSPKAEPQPETKPENLPRSHGDVGLQKETVVPGIVDFELIHEELKTTKPQTSQPTPSAYRFGRLSHHSFFSRHHPQPQRVTHIQVTGREDLEHSLPLTTSFQLLQAPGVQPMDLTPSADIAGKPVCVVRDEFSLSALTQPTFLSRCLMGMPTISVPIGDPQSNRNPQLSTSDTWRKKLKDLASRVTVFTKEIQPKPDEQKEEPPLREPPPREQGAKYSAETGRLIPASSQALTRRNRQGQRVHPSSKDGGVQASILQDQELLILELLCQILQTDSLRAIQFWLLYAPSKEKDLALGLLQTAVAQLIPQPLSSIPAEKLWNHLQELQEPQETQEAAYSPSLKKTRSPPLPKTDKPEYIGKAQVLLVHPSEDPEEKTTKAES</sequence>
<dbReference type="EMBL" id="AF257502">
    <property type="protein sequence ID" value="AAG37103.1"/>
    <property type="molecule type" value="mRNA"/>
</dbReference>
<dbReference type="EMBL" id="AF257503">
    <property type="protein sequence ID" value="AAG37104.1"/>
    <property type="molecule type" value="mRNA"/>
</dbReference>
<dbReference type="EMBL" id="AF521591">
    <property type="protein sequence ID" value="AAP50907.1"/>
    <property type="status" value="ALT_INIT"/>
    <property type="molecule type" value="mRNA"/>
</dbReference>
<dbReference type="EMBL" id="AF521592">
    <property type="protein sequence ID" value="AAP50908.1"/>
    <property type="status" value="ALT_INIT"/>
    <property type="molecule type" value="mRNA"/>
</dbReference>
<dbReference type="EMBL" id="AY243457">
    <property type="protein sequence ID" value="AAP41210.2"/>
    <property type="molecule type" value="mRNA"/>
</dbReference>
<dbReference type="EMBL" id="AY243458">
    <property type="protein sequence ID" value="AAP41211.1"/>
    <property type="status" value="ALT_FRAME"/>
    <property type="molecule type" value="mRNA"/>
</dbReference>
<dbReference type="EMBL" id="AY243459">
    <property type="protein sequence ID" value="AAP41212.1"/>
    <property type="molecule type" value="mRNA"/>
</dbReference>
<dbReference type="EMBL" id="EU622858">
    <property type="protein sequence ID" value="ACD01420.1"/>
    <property type="molecule type" value="mRNA"/>
</dbReference>
<dbReference type="EMBL" id="AK038284">
    <property type="protein sequence ID" value="BAC29958.1"/>
    <property type="molecule type" value="mRNA"/>
</dbReference>
<dbReference type="CCDS" id="CCDS23873.1">
    <molecule id="Q7TSD4-1"/>
</dbReference>
<dbReference type="CCDS" id="CCDS23874.2">
    <molecule id="Q7TSD4-5"/>
</dbReference>
<dbReference type="CCDS" id="CCDS48572.1">
    <molecule id="Q7TSD4-2"/>
</dbReference>
<dbReference type="CCDS" id="CCDS48573.1">
    <molecule id="Q7TSD4-6"/>
</dbReference>
<dbReference type="RefSeq" id="NP_001017407.1">
    <molecule id="Q7TSD4-7"/>
    <property type="nucleotide sequence ID" value="NM_001017407.1"/>
</dbReference>
<dbReference type="RefSeq" id="NP_001017409.1">
    <property type="nucleotide sequence ID" value="NM_001017409.1"/>
</dbReference>
<dbReference type="RefSeq" id="NP_001017419.1">
    <molecule id="Q7TSD4-2"/>
    <property type="nucleotide sequence ID" value="NM_001017419.2"/>
</dbReference>
<dbReference type="RefSeq" id="NP_001017433.1">
    <molecule id="Q7TSD4-1"/>
    <property type="nucleotide sequence ID" value="NM_001017433.2"/>
</dbReference>
<dbReference type="RefSeq" id="NP_001017441.2">
    <molecule id="Q7TSD4-5"/>
    <property type="nucleotide sequence ID" value="NM_001017441.2"/>
</dbReference>
<dbReference type="RefSeq" id="NP_075551.3">
    <molecule id="Q7TSD4-6"/>
    <property type="nucleotide sequence ID" value="NM_023064.3"/>
</dbReference>
<dbReference type="BioGRID" id="211165">
    <property type="interactions" value="1"/>
</dbReference>
<dbReference type="FunCoup" id="Q7TSD4">
    <property type="interactions" value="29"/>
</dbReference>
<dbReference type="STRING" id="10090.ENSMUSP00000036422"/>
<dbReference type="GlyGen" id="Q7TSD4">
    <property type="glycosylation" value="3 sites"/>
</dbReference>
<dbReference type="iPTMnet" id="Q7TSD4"/>
<dbReference type="PhosphoSitePlus" id="Q7TSD4"/>
<dbReference type="PaxDb" id="10090-ENSMUSP00000036422"/>
<dbReference type="ProteomicsDB" id="262938">
    <molecule id="Q7TSD4-1"/>
</dbReference>
<dbReference type="ProteomicsDB" id="262939">
    <molecule id="Q7TSD4-2"/>
</dbReference>
<dbReference type="ProteomicsDB" id="262940">
    <molecule id="Q7TSD4-3"/>
</dbReference>
<dbReference type="ProteomicsDB" id="262941">
    <molecule id="Q7TSD4-4"/>
</dbReference>
<dbReference type="ProteomicsDB" id="262942">
    <molecule id="Q7TSD4-5"/>
</dbReference>
<dbReference type="ProteomicsDB" id="262943">
    <molecule id="Q7TSD4-6"/>
</dbReference>
<dbReference type="ProteomicsDB" id="262944">
    <molecule id="Q7TSD4-7"/>
</dbReference>
<dbReference type="ProteomicsDB" id="262945">
    <molecule id="Q7TSD4-8"/>
</dbReference>
<dbReference type="Antibodypedia" id="55853">
    <property type="antibodies" value="106 antibodies from 16 providers"/>
</dbReference>
<dbReference type="DNASU" id="65971"/>
<dbReference type="Ensembl" id="ENSMUST00000035894.12">
    <molecule id="Q7TSD4-1"/>
    <property type="protein sequence ID" value="ENSMUSP00000036422.6"/>
    <property type="gene ID" value="ENSMUSG00000020096.22"/>
</dbReference>
<dbReference type="Ensembl" id="ENSMUST00000121297.8">
    <molecule id="Q7TSD4-5"/>
    <property type="protein sequence ID" value="ENSMUSP00000113253.2"/>
    <property type="gene ID" value="ENSMUSG00000020096.22"/>
</dbReference>
<dbReference type="Ensembl" id="ENSMUST00000122261.8">
    <molecule id="Q7TSD4-2"/>
    <property type="protein sequence ID" value="ENSMUSP00000113902.2"/>
    <property type="gene ID" value="ENSMUSG00000020096.22"/>
</dbReference>
<dbReference type="GeneID" id="65971"/>
<dbReference type="KEGG" id="mmu:65971"/>
<dbReference type="UCSC" id="uc007ffm.2">
    <molecule id="Q7TSD4-5"/>
    <property type="organism name" value="mouse"/>
</dbReference>
<dbReference type="UCSC" id="uc007ffn.2">
    <molecule id="Q7TSD4-1"/>
    <property type="organism name" value="mouse"/>
</dbReference>
<dbReference type="UCSC" id="uc007ffo.2">
    <molecule id="Q7TSD4-2"/>
    <property type="organism name" value="mouse"/>
</dbReference>
<dbReference type="UCSC" id="uc007ffq.1">
    <molecule id="Q7TSD4-7"/>
    <property type="organism name" value="mouse"/>
</dbReference>
<dbReference type="UCSC" id="uc007ffr.2">
    <molecule id="Q7TSD4-6"/>
    <property type="organism name" value="mouse"/>
</dbReference>
<dbReference type="AGR" id="MGI:1923820"/>
<dbReference type="CTD" id="219793"/>
<dbReference type="MGI" id="MGI:1923820">
    <property type="gene designation" value="Tbata"/>
</dbReference>
<dbReference type="VEuPathDB" id="HostDB:ENSMUSG00000020096"/>
<dbReference type="eggNOG" id="ENOG502RZQH">
    <property type="taxonomic scope" value="Eukaryota"/>
</dbReference>
<dbReference type="GeneTree" id="ENSGT00510000048896"/>
<dbReference type="HOGENOM" id="CLU_063592_1_0_1"/>
<dbReference type="InParanoid" id="Q7TSD4"/>
<dbReference type="OMA" id="VGDPQSN"/>
<dbReference type="OrthoDB" id="9982103at2759"/>
<dbReference type="PhylomeDB" id="Q7TSD4"/>
<dbReference type="TreeFam" id="TF333401"/>
<dbReference type="BioGRID-ORCS" id="65971">
    <property type="hits" value="2 hits in 77 CRISPR screens"/>
</dbReference>
<dbReference type="ChiTaRS" id="Tbata">
    <property type="organism name" value="mouse"/>
</dbReference>
<dbReference type="PRO" id="PR:Q7TSD4"/>
<dbReference type="Proteomes" id="UP000000589">
    <property type="component" value="Chromosome 10"/>
</dbReference>
<dbReference type="RNAct" id="Q7TSD4">
    <property type="molecule type" value="protein"/>
</dbReference>
<dbReference type="Bgee" id="ENSMUSG00000020096">
    <property type="expression patterns" value="Expressed in thymus and 73 other cell types or tissues"/>
</dbReference>
<dbReference type="ExpressionAtlas" id="Q7TSD4">
    <property type="expression patterns" value="baseline and differential"/>
</dbReference>
<dbReference type="GO" id="GO:0005829">
    <property type="term" value="C:cytosol"/>
    <property type="evidence" value="ECO:0000314"/>
    <property type="project" value="UniProtKB"/>
</dbReference>
<dbReference type="GO" id="GO:0005634">
    <property type="term" value="C:nucleus"/>
    <property type="evidence" value="ECO:0000314"/>
    <property type="project" value="UniProtKB"/>
</dbReference>
<dbReference type="GO" id="GO:0048515">
    <property type="term" value="P:spermatid differentiation"/>
    <property type="evidence" value="ECO:0000303"/>
    <property type="project" value="UniProtKB"/>
</dbReference>
<dbReference type="InterPro" id="IPR037394">
    <property type="entry name" value="TBATA-like"/>
</dbReference>
<dbReference type="PANTHER" id="PTHR33772:SF3">
    <property type="entry name" value="PROTEIN TBATA"/>
    <property type="match status" value="1"/>
</dbReference>
<dbReference type="PANTHER" id="PTHR33772">
    <property type="entry name" value="THYMUS, BRAIN AND TESTES-ASSOCIATED"/>
    <property type="match status" value="1"/>
</dbReference>
<dbReference type="Pfam" id="PF15256">
    <property type="entry name" value="SPATIAL"/>
    <property type="match status" value="1"/>
</dbReference>
<name>TBATA_MOUSE</name>
<protein>
    <recommendedName>
        <fullName>Protein TBATA</fullName>
    </recommendedName>
    <alternativeName>
        <fullName>Protein SPATIAL</fullName>
    </alternativeName>
    <alternativeName>
        <fullName evidence="8">Stromal protein associated with thymii and lymph node</fullName>
    </alternativeName>
    <alternativeName>
        <fullName>Thymus, brain and testes-associated protein</fullName>
    </alternativeName>
</protein>
<gene>
    <name type="primary">Tbata</name>
    <name type="synonym">Spatial</name>
</gene>
<organism>
    <name type="scientific">Mus musculus</name>
    <name type="common">Mouse</name>
    <dbReference type="NCBI Taxonomy" id="10090"/>
    <lineage>
        <taxon>Eukaryota</taxon>
        <taxon>Metazoa</taxon>
        <taxon>Chordata</taxon>
        <taxon>Craniata</taxon>
        <taxon>Vertebrata</taxon>
        <taxon>Euteleostomi</taxon>
        <taxon>Mammalia</taxon>
        <taxon>Eutheria</taxon>
        <taxon>Euarchontoglires</taxon>
        <taxon>Glires</taxon>
        <taxon>Rodentia</taxon>
        <taxon>Myomorpha</taxon>
        <taxon>Muroidea</taxon>
        <taxon>Muridae</taxon>
        <taxon>Murinae</taxon>
        <taxon>Mus</taxon>
        <taxon>Mus</taxon>
    </lineage>
</organism>
<accession>Q7TSD4</accession>
<accession>B2ZA64</accession>
<accession>Q6XBG6</accession>
<accession>Q6XBG7</accession>
<accession>Q6XBG8</accession>
<accession>Q7TSD5</accession>
<accession>Q8BYU0</accession>
<accession>Q9EQE4</accession>
<accession>Q9EQE5</accession>
<proteinExistence type="evidence at protein level"/>
<comment type="function">
    <text evidence="5 7">Isoform 1 and isoform 2 may play a role in spermatid differentiation. Isoform 1 and isoform 2 regulate thymus function by modulating stromal cell proliferation via interference with the NEDD8 pathway.</text>
</comment>
<comment type="subunit">
    <text evidence="5 6 7">Interacts with KIF17. Interacts with UBA3.</text>
</comment>
<comment type="subcellular location">
    <molecule>Isoform 1</molecule>
    <subcellularLocation>
        <location evidence="5">Cytoplasm</location>
        <location evidence="5">Cytosol</location>
    </subcellularLocation>
    <text evidence="5">Located throughout the cytosol of early round spermatids. By the end stages of round spermatid development, concentrated at the side of the cell near the nascent flagellum and in the manchette. In mature sperm, located in the principle piece of the tail.</text>
</comment>
<comment type="subcellular location">
    <molecule>Isoform 2</molecule>
    <subcellularLocation>
        <location evidence="5">Cytoplasm</location>
        <location evidence="5">Cytosol</location>
    </subcellularLocation>
    <text evidence="5">Located throughout the cytosol of early round spermatids. By the end stages of round spermatid development, concentrated at the side of the cell near the nascent flagellum and in the manchette. In mature sperm, located in the principle piece of the tail.</text>
</comment>
<comment type="subcellular location">
    <molecule>Isoform 6</molecule>
    <subcellularLocation>
        <location evidence="2">Nucleus</location>
    </subcellularLocation>
</comment>
<comment type="subcellular location">
    <molecule>Isoform 7</molecule>
    <subcellularLocation>
        <location evidence="2">Nucleus</location>
    </subcellularLocation>
</comment>
<comment type="alternative products">
    <event type="alternative splicing"/>
    <isoform>
        <id>Q7TSD4-1</id>
        <name evidence="3">1</name>
        <name evidence="3">Epsilon</name>
        <sequence type="displayed"/>
    </isoform>
    <isoform>
        <id>Q7TSD4-2</id>
        <name evidence="3">2</name>
        <name evidence="3">Delta</name>
        <sequence type="described" ref="VSP_052937"/>
    </isoform>
    <isoform>
        <id>Q7TSD4-3</id>
        <name evidence="4">3</name>
        <name evidence="4">Beta</name>
        <sequence type="described" ref="VSP_052935 VSP_052937 VSP_052940 VSP_052941 VSP_052942"/>
    </isoform>
    <isoform>
        <id>Q7TSD4-4</id>
        <name evidence="4">4</name>
        <name evidence="4">Alpha</name>
        <sequence type="described" ref="VSP_052935 VSP_052939 VSP_052941 VSP_052942"/>
    </isoform>
    <isoform>
        <id>Q7TSD4-5</id>
        <name evidence="4">5</name>
        <name evidence="4">Gamma</name>
        <sequence type="described" ref="VSP_052937 VSP_052941 VSP_052942"/>
    </isoform>
    <isoform>
        <id>Q7TSD4-6</id>
        <name evidence="2">6</name>
        <sequence type="described" ref="VSP_052935 VSP_052941 VSP_052942"/>
    </isoform>
    <isoform>
        <id>Q7TSD4-7</id>
        <name evidence="2">7</name>
        <sequence type="described" ref="VSP_052935 VSP_052937 VSP_052941 VSP_052942"/>
    </isoform>
    <isoform>
        <id>Q7TSD4-8</id>
        <name>8</name>
        <name>Zeta</name>
        <sequence type="described" ref="VSP_052935 VSP_052936 VSP_052938"/>
    </isoform>
</comment>
<comment type="tissue specificity">
    <text evidence="3">Expressed in the subcapsular region of the thymus and lymph node (at protein level). Highly expressed in thymic cortical stromal cells and testis. Lower levels found in brain cortex, hippocampus, kidney, cerebellum, skeletal muscle, epididymis and ovary. No expression detected in other lymphoid organs including bone marrow and spleen. Isoform 1 and isoform 2 are expressed predominantly in testis. Isoform 3, isoform 4 and isoform 5 are expressed predominantly in thymus although isoform 3 is also expressed in testis. In the CNS, highly expressed in restricted areas, the cerebellum and hippocampus.</text>
</comment>
<comment type="developmental stage">
    <text evidence="2 3 5 6">In testis, isoform 1 and isoform 2 are expressed only in the adult from postnatal week 7. Expression is detected in pachytene spermatocytes, increases greatly in round spermatids and is very strong in round/elongating and elongating spermatids. Expression is reduced in condensed spermatids and persists in spermatozoa. Isoform 3 is specifically expressed in round spermatids and is greatly reduced in spermatids under maturation (at protein level). Isoform 7 is detected in the embryo from day 10 while isoform 7 is not detected until day 12. In brain, predominantly expressed by granule cells during cerebellar development. Isoform 1 and isoform 3 are differentially expressed during cerebellar development.</text>
</comment>
<comment type="induction">
    <text>Up-regulated in aged mice (4 months of age or older).</text>
</comment>
<comment type="similarity">
    <text evidence="12">Belongs to the TBATA family.</text>
</comment>
<comment type="sequence caution" evidence="12">
    <conflict type="frameshift">
        <sequence resource="EMBL-CDS" id="AAP41211"/>
    </conflict>
</comment>
<comment type="sequence caution" evidence="12">
    <conflict type="erroneous initiation">
        <sequence resource="EMBL-CDS" id="AAP50907"/>
    </conflict>
    <text>Extended N-terminus.</text>
</comment>
<comment type="sequence caution" evidence="12">
    <conflict type="erroneous initiation">
        <sequence resource="EMBL-CDS" id="AAP50908"/>
    </conflict>
    <text>Extended N-terminus.</text>
</comment>
<keyword id="KW-0025">Alternative splicing</keyword>
<keyword id="KW-0963">Cytoplasm</keyword>
<keyword id="KW-0217">Developmental protein</keyword>
<keyword id="KW-0221">Differentiation</keyword>
<keyword id="KW-0539">Nucleus</keyword>
<keyword id="KW-1185">Reference proteome</keyword>
<keyword id="KW-0744">Spermatogenesis</keyword>
<evidence type="ECO:0000256" key="1">
    <source>
        <dbReference type="SAM" id="MobiDB-lite"/>
    </source>
</evidence>
<evidence type="ECO:0000269" key="2">
    <source>
    </source>
</evidence>
<evidence type="ECO:0000269" key="3">
    <source>
    </source>
</evidence>
<evidence type="ECO:0000269" key="4">
    <source>
    </source>
</evidence>
<evidence type="ECO:0000269" key="5">
    <source>
    </source>
</evidence>
<evidence type="ECO:0000269" key="6">
    <source>
    </source>
</evidence>
<evidence type="ECO:0000269" key="7">
    <source>
    </source>
</evidence>
<evidence type="ECO:0000303" key="8">
    <source>
    </source>
</evidence>
<evidence type="ECO:0000303" key="9">
    <source>
    </source>
</evidence>
<evidence type="ECO:0000303" key="10">
    <source>
    </source>
</evidence>
<evidence type="ECO:0000303" key="11">
    <source ref="4"/>
</evidence>
<evidence type="ECO:0000305" key="12"/>
<evidence type="ECO:0000312" key="13">
    <source>
        <dbReference type="EMBL" id="AAG37103.1"/>
    </source>
</evidence>
<evidence type="ECO:0000312" key="14">
    <source>
        <dbReference type="EMBL" id="AAP41210.2"/>
    </source>
</evidence>
<evidence type="ECO:0000312" key="15">
    <source>
        <dbReference type="EMBL" id="AAP41212.1"/>
    </source>
</evidence>
<evidence type="ECO:0000312" key="16">
    <source>
        <dbReference type="EMBL" id="AAP50908.1"/>
    </source>
</evidence>
<evidence type="ECO:0000312" key="17">
    <source>
        <dbReference type="EMBL" id="ACD01420.1"/>
    </source>
</evidence>
<evidence type="ECO:0000312" key="18">
    <source>
        <dbReference type="EMBL" id="BAC29958.1"/>
    </source>
</evidence>
<reference evidence="12 13" key="1">
    <citation type="journal article" date="2000" name="Genes Immun.">
        <title>Spatial, a gene expressed in thymic stromal cells, depends on three-dimensional thymus organization for its expression.</title>
        <authorList>
            <person name="Flomerfelt F.A."/>
            <person name="Kim M.G."/>
            <person name="Schwartz R.H."/>
        </authorList>
    </citation>
    <scope>NUCLEOTIDE SEQUENCE [MRNA] (ISOFORMS 6 AND 7)</scope>
    <scope>SUBCELLULAR LOCATION</scope>
    <scope>DEVELOPMENTAL STAGE</scope>
    <source>
        <strain evidence="17">C57BL/6J</strain>
        <tissue evidence="17">Thymus</tissue>
    </source>
</reference>
<reference evidence="12 16" key="2">
    <citation type="journal article" date="2003" name="Gene Expr. Patterns">
        <title>Spatial, a new nuclear factor tightly regulated during mouse spermatogenesis.</title>
        <authorList>
            <person name="Irla M."/>
            <person name="Puthier D."/>
            <person name="Le Goffic R."/>
            <person name="Victorero G."/>
            <person name="Freeman T."/>
            <person name="Naquet P."/>
            <person name="Samson M."/>
            <person name="Nguyen C."/>
        </authorList>
    </citation>
    <scope>NUCLEOTIDE SEQUENCE [MRNA] (ISOFORMS 1 AND 2)</scope>
    <scope>TISSUE SPECIFICITY</scope>
    <scope>DEVELOPMENTAL STAGE</scope>
    <source>
        <strain evidence="16">C57BL/6J</strain>
        <tissue evidence="16">Testis</tissue>
    </source>
</reference>
<reference evidence="12 14" key="3">
    <citation type="journal article" date="2004" name="BMC Genomics">
        <title>Genomic organization and the tissue distribution of alternatively spliced isoforms of the mouse Spatial gene.</title>
        <authorList>
            <person name="Irla M."/>
            <person name="Puthier D."/>
            <person name="Granjeaud S."/>
            <person name="Saade M."/>
            <person name="Victorero G."/>
            <person name="Mattei M.-G."/>
            <person name="Nguyen C."/>
        </authorList>
    </citation>
    <scope>NUCLEOTIDE SEQUENCE [MRNA] (ISOFORM 3)</scope>
    <scope>PARTIAL NUCLEOTIDE SEQUENCE [MRNA] (ISOFORMS 4 AND 5)</scope>
    <scope>ALTERNATIVE SPLICING</scope>
    <source>
        <strain evidence="14">C57BL/6J</strain>
        <tissue evidence="15">Fetal thymus</tissue>
        <tissue evidence="14">Thymus</tissue>
    </source>
</reference>
<reference evidence="12 17" key="4">
    <citation type="submission" date="2008-04" db="EMBL/GenBank/DDBJ databases">
        <authorList>
            <person name="Flomerfelt F.A."/>
            <person name="Alleman M.K."/>
            <person name="League S.C."/>
            <person name="Gress R.E."/>
        </authorList>
    </citation>
    <scope>NUCLEOTIDE SEQUENCE [MRNA] (ISOFORM 8)</scope>
    <source>
        <strain evidence="17">C57BL/6J</strain>
        <tissue evidence="17">Thymus</tissue>
    </source>
</reference>
<reference evidence="12 18" key="5">
    <citation type="journal article" date="2005" name="Science">
        <title>The transcriptional landscape of the mammalian genome.</title>
        <authorList>
            <person name="Carninci P."/>
            <person name="Kasukawa T."/>
            <person name="Katayama S."/>
            <person name="Gough J."/>
            <person name="Frith M.C."/>
            <person name="Maeda N."/>
            <person name="Oyama R."/>
            <person name="Ravasi T."/>
            <person name="Lenhard B."/>
            <person name="Wells C."/>
            <person name="Kodzius R."/>
            <person name="Shimokawa K."/>
            <person name="Bajic V.B."/>
            <person name="Brenner S.E."/>
            <person name="Batalov S."/>
            <person name="Forrest A.R."/>
            <person name="Zavolan M."/>
            <person name="Davis M.J."/>
            <person name="Wilming L.G."/>
            <person name="Aidinis V."/>
            <person name="Allen J.E."/>
            <person name="Ambesi-Impiombato A."/>
            <person name="Apweiler R."/>
            <person name="Aturaliya R.N."/>
            <person name="Bailey T.L."/>
            <person name="Bansal M."/>
            <person name="Baxter L."/>
            <person name="Beisel K.W."/>
            <person name="Bersano T."/>
            <person name="Bono H."/>
            <person name="Chalk A.M."/>
            <person name="Chiu K.P."/>
            <person name="Choudhary V."/>
            <person name="Christoffels A."/>
            <person name="Clutterbuck D.R."/>
            <person name="Crowe M.L."/>
            <person name="Dalla E."/>
            <person name="Dalrymple B.P."/>
            <person name="de Bono B."/>
            <person name="Della Gatta G."/>
            <person name="di Bernardo D."/>
            <person name="Down T."/>
            <person name="Engstrom P."/>
            <person name="Fagiolini M."/>
            <person name="Faulkner G."/>
            <person name="Fletcher C.F."/>
            <person name="Fukushima T."/>
            <person name="Furuno M."/>
            <person name="Futaki S."/>
            <person name="Gariboldi M."/>
            <person name="Georgii-Hemming P."/>
            <person name="Gingeras T.R."/>
            <person name="Gojobori T."/>
            <person name="Green R.E."/>
            <person name="Gustincich S."/>
            <person name="Harbers M."/>
            <person name="Hayashi Y."/>
            <person name="Hensch T.K."/>
            <person name="Hirokawa N."/>
            <person name="Hill D."/>
            <person name="Huminiecki L."/>
            <person name="Iacono M."/>
            <person name="Ikeo K."/>
            <person name="Iwama A."/>
            <person name="Ishikawa T."/>
            <person name="Jakt M."/>
            <person name="Kanapin A."/>
            <person name="Katoh M."/>
            <person name="Kawasawa Y."/>
            <person name="Kelso J."/>
            <person name="Kitamura H."/>
            <person name="Kitano H."/>
            <person name="Kollias G."/>
            <person name="Krishnan S.P."/>
            <person name="Kruger A."/>
            <person name="Kummerfeld S.K."/>
            <person name="Kurochkin I.V."/>
            <person name="Lareau L.F."/>
            <person name="Lazarevic D."/>
            <person name="Lipovich L."/>
            <person name="Liu J."/>
            <person name="Liuni S."/>
            <person name="McWilliam S."/>
            <person name="Madan Babu M."/>
            <person name="Madera M."/>
            <person name="Marchionni L."/>
            <person name="Matsuda H."/>
            <person name="Matsuzawa S."/>
            <person name="Miki H."/>
            <person name="Mignone F."/>
            <person name="Miyake S."/>
            <person name="Morris K."/>
            <person name="Mottagui-Tabar S."/>
            <person name="Mulder N."/>
            <person name="Nakano N."/>
            <person name="Nakauchi H."/>
            <person name="Ng P."/>
            <person name="Nilsson R."/>
            <person name="Nishiguchi S."/>
            <person name="Nishikawa S."/>
            <person name="Nori F."/>
            <person name="Ohara O."/>
            <person name="Okazaki Y."/>
            <person name="Orlando V."/>
            <person name="Pang K.C."/>
            <person name="Pavan W.J."/>
            <person name="Pavesi G."/>
            <person name="Pesole G."/>
            <person name="Petrovsky N."/>
            <person name="Piazza S."/>
            <person name="Reed J."/>
            <person name="Reid J.F."/>
            <person name="Ring B.Z."/>
            <person name="Ringwald M."/>
            <person name="Rost B."/>
            <person name="Ruan Y."/>
            <person name="Salzberg S.L."/>
            <person name="Sandelin A."/>
            <person name="Schneider C."/>
            <person name="Schoenbach C."/>
            <person name="Sekiguchi K."/>
            <person name="Semple C.A."/>
            <person name="Seno S."/>
            <person name="Sessa L."/>
            <person name="Sheng Y."/>
            <person name="Shibata Y."/>
            <person name="Shimada H."/>
            <person name="Shimada K."/>
            <person name="Silva D."/>
            <person name="Sinclair B."/>
            <person name="Sperling S."/>
            <person name="Stupka E."/>
            <person name="Sugiura K."/>
            <person name="Sultana R."/>
            <person name="Takenaka Y."/>
            <person name="Taki K."/>
            <person name="Tammoja K."/>
            <person name="Tan S.L."/>
            <person name="Tang S."/>
            <person name="Taylor M.S."/>
            <person name="Tegner J."/>
            <person name="Teichmann S.A."/>
            <person name="Ueda H.R."/>
            <person name="van Nimwegen E."/>
            <person name="Verardo R."/>
            <person name="Wei C.L."/>
            <person name="Yagi K."/>
            <person name="Yamanishi H."/>
            <person name="Zabarovsky E."/>
            <person name="Zhu S."/>
            <person name="Zimmer A."/>
            <person name="Hide W."/>
            <person name="Bult C."/>
            <person name="Grimmond S.M."/>
            <person name="Teasdale R.D."/>
            <person name="Liu E.T."/>
            <person name="Brusic V."/>
            <person name="Quackenbush J."/>
            <person name="Wahlestedt C."/>
            <person name="Mattick J.S."/>
            <person name="Hume D.A."/>
            <person name="Kai C."/>
            <person name="Sasaki D."/>
            <person name="Tomaru Y."/>
            <person name="Fukuda S."/>
            <person name="Kanamori-Katayama M."/>
            <person name="Suzuki M."/>
            <person name="Aoki J."/>
            <person name="Arakawa T."/>
            <person name="Iida J."/>
            <person name="Imamura K."/>
            <person name="Itoh M."/>
            <person name="Kato T."/>
            <person name="Kawaji H."/>
            <person name="Kawagashira N."/>
            <person name="Kawashima T."/>
            <person name="Kojima M."/>
            <person name="Kondo S."/>
            <person name="Konno H."/>
            <person name="Nakano K."/>
            <person name="Ninomiya N."/>
            <person name="Nishio T."/>
            <person name="Okada M."/>
            <person name="Plessy C."/>
            <person name="Shibata K."/>
            <person name="Shiraki T."/>
            <person name="Suzuki S."/>
            <person name="Tagami M."/>
            <person name="Waki K."/>
            <person name="Watahiki A."/>
            <person name="Okamura-Oho Y."/>
            <person name="Suzuki H."/>
            <person name="Kawai J."/>
            <person name="Hayashizaki Y."/>
        </authorList>
    </citation>
    <scope>PARTIAL NUCLEOTIDE SEQUENCE [LARGE SCALE MRNA] (ISOFORM 7)</scope>
    <source>
        <strain evidence="18">C57BL/6J</strain>
        <tissue evidence="18">Thymus</tissue>
    </source>
</reference>
<reference evidence="12" key="6">
    <citation type="journal article" date="2007" name="Exp. Cell Res.">
        <title>Dynamic distribution of Spatial during mouse spermatogenesis and its interaction with the kinesin KIF17b.</title>
        <authorList>
            <person name="Saade M."/>
            <person name="Irla M."/>
            <person name="Govin J."/>
            <person name="Victorero G."/>
            <person name="Samson M."/>
            <person name="Nguyen C."/>
        </authorList>
    </citation>
    <scope>FUNCTION</scope>
    <scope>INTERACTION WITH KIF17</scope>
    <scope>SUBCELLULAR LOCATION</scope>
    <scope>DEVELOPMENTAL STAGE</scope>
</reference>
<reference key="7">
    <citation type="journal article" date="2007" name="Exp. Cell Res.">
        <title>Neuronal distribution of spatial in the developing cerebellum and hippocampus and its somatodendritic association with the kinesin motor KIF17.</title>
        <authorList>
            <person name="Irla M."/>
            <person name="Saade M."/>
            <person name="Fernandez C."/>
            <person name="Chasson L."/>
            <person name="Victorero G."/>
            <person name="Dahmane N."/>
            <person name="Chazal G."/>
            <person name="Nguyen C."/>
        </authorList>
    </citation>
    <scope>DEVELOPMENTAL STAGE</scope>
    <scope>INTERACTION WITH KIF17</scope>
</reference>
<reference key="8">
    <citation type="journal article" date="2010" name="J. Exp. Med.">
        <title>Tbata modulates thymic stromal cell proliferation and thymus function.</title>
        <authorList>
            <person name="Flomerfelt F.A."/>
            <person name="El Kassar N."/>
            <person name="Gurunathan C."/>
            <person name="Chua K.S."/>
            <person name="League S.C."/>
            <person name="Schmitz S."/>
            <person name="Gershon T.R."/>
            <person name="Kapoor V."/>
            <person name="Yan X.Y."/>
            <person name="Schwartz R.H."/>
            <person name="Gress R.E."/>
        </authorList>
    </citation>
    <scope>FUNCTION</scope>
    <scope>INTERACTION WITH UBA3</scope>
</reference>
<feature type="chain" id="PRO_0000351147" description="Protein TBATA">
    <location>
        <begin position="1"/>
        <end position="393"/>
    </location>
</feature>
<feature type="region of interest" description="Disordered" evidence="1">
    <location>
        <begin position="1"/>
        <end position="39"/>
    </location>
</feature>
<feature type="region of interest" description="Disordered" evidence="1">
    <location>
        <begin position="168"/>
        <end position="188"/>
    </location>
</feature>
<feature type="region of interest" description="Disordered" evidence="1">
    <location>
        <begin position="202"/>
        <end position="264"/>
    </location>
</feature>
<feature type="region of interest" description="Disordered" evidence="1">
    <location>
        <begin position="340"/>
        <end position="393"/>
    </location>
</feature>
<feature type="compositionally biased region" description="Basic and acidic residues" evidence="1">
    <location>
        <begin position="20"/>
        <end position="34"/>
    </location>
</feature>
<feature type="compositionally biased region" description="Polar residues" evidence="1">
    <location>
        <begin position="173"/>
        <end position="185"/>
    </location>
</feature>
<feature type="compositionally biased region" description="Basic and acidic residues" evidence="1">
    <location>
        <begin position="205"/>
        <end position="227"/>
    </location>
</feature>
<feature type="compositionally biased region" description="Basic and acidic residues" evidence="1">
    <location>
        <begin position="380"/>
        <end position="393"/>
    </location>
</feature>
<feature type="splice variant" id="VSP_052935" description="In isoform 3, isoform 4, isoform 6, isoform 7 and isoform 8." evidence="8 10 11">
    <original>MTTEVNQLSEHPLV</original>
    <variation>MFLGNVYKGSLAPRRDEVT</variation>
    <location>
        <begin position="1"/>
        <end position="14"/>
    </location>
</feature>
<feature type="splice variant" id="VSP_052936" description="In isoform 8." evidence="11">
    <original>VTGREDLEHSLPLTTSFQLLQAPGVQPMDLTPSADIAGKPVCVVRDEFSLSALTQPTFLSRCLMGMPTI</original>
    <variation>APSSSWGPAHGSHSLCRYRWEACLRGQGRVLSVGLDSAHILIPLSDGDAHHLCPHWGSTVQSEPPAFYF</variation>
    <location>
        <begin position="98"/>
        <end position="166"/>
    </location>
</feature>
<feature type="splice variant" id="VSP_052937" description="In isoform 2, isoform 3, isoform 5 and isoform 7." evidence="8 9 10">
    <location>
        <begin position="98"/>
        <end position="131"/>
    </location>
</feature>
<feature type="splice variant" id="VSP_052938" description="In isoform 8." evidence="11">
    <location>
        <begin position="167"/>
        <end position="393"/>
    </location>
</feature>
<feature type="splice variant" id="VSP_052939" description="In isoform 4." evidence="10">
    <original>S</original>
    <variation>SAEDTGRTKQHLPPPTPILPVLS</variation>
    <location>
        <position position="184"/>
    </location>
</feature>
<feature type="splice variant" id="VSP_052940" description="In isoform 3." evidence="10">
    <original>D</original>
    <variation>DLKTQGGQNNTYRPPPPSFLSSQT</variation>
    <location>
        <position position="185"/>
    </location>
</feature>
<feature type="splice variant" id="VSP_052941" description="In isoform 3, isoform 4, isoform 5, isoform 6 and isoform 7." evidence="8 10">
    <original>QKEEPPLREPPPREQ</original>
    <variation>VGVAQRMEPRKKRPS</variation>
    <location>
        <begin position="212"/>
        <end position="226"/>
    </location>
</feature>
<feature type="splice variant" id="VSP_052942" description="In isoform 3, isoform 4, isoform 5, isoform 6 and isoform 7." evidence="8 10">
    <location>
        <begin position="227"/>
        <end position="393"/>
    </location>
</feature>